<accession>E0SRA9</accession>
<sequence length="335" mass="37346">MAKIYKDEDISLEPIKNKTIAILGYGSQGRAWALNLRDSGLNVVVGLERQGDSWRRAIDDGFKPMYTKDAVAIADIIVFLVPDMVQKSLWLNSVKDFMKKGADLVFAHGFNIHFKIIEPPKDSDVYMIAPKSPGPIVRRSYEMGGGVPALVAVYQNVSGEALQKALAIAKGIGCARAGVIESTFKEETETDLFGEQVILVGGIMELIKASFETLVEEGYQPEVAYFETVNELKLIVDLIYEKGLTGMLRAVSDTAKYGGITVGKFIIDKSVRDKMKIVLERIRSGEFAREWIKEYERGMPTVFKELSELEGSTIETVGRKLREMMFRGMKQISSH</sequence>
<keyword id="KW-0002">3D-structure</keyword>
<keyword id="KW-0028">Amino-acid biosynthesis</keyword>
<keyword id="KW-0100">Branched-chain amino acid biosynthesis</keyword>
<keyword id="KW-0460">Magnesium</keyword>
<keyword id="KW-0479">Metal-binding</keyword>
<keyword id="KW-0521">NADP</keyword>
<keyword id="KW-0560">Oxidoreductase</keyword>
<keyword id="KW-1185">Reference proteome</keyword>
<comment type="function">
    <text evidence="4 6">Involved in the biosynthesis of branched-chain amino acids (BCAA). Catalyzes an alkyl-migration followed by a ketol-acid reduction of (S)-2-acetolactate (S2AL) to yield (R)-2,3-dihydroxy-isovalerate. In the isomerase reaction, S2AL is rearranged via a Mg-dependent methyl migration to produce 3-hydroxy-3-methyl-2-ketobutyrate (HMKB). In the reductase reaction, this 2-ketoacid undergoes a metal-dependent reduction by NADPH or NADH to yield (R)-2,3-dihydroxy-isovalerate.</text>
</comment>
<comment type="catalytic activity">
    <reaction evidence="4 6">
        <text>(2R)-2,3-dihydroxy-3-methylbutanoate + NAD(+) = (2S)-2-acetolactate + NADH + H(+)</text>
        <dbReference type="Rhea" id="RHEA:30627"/>
        <dbReference type="ChEBI" id="CHEBI:15378"/>
        <dbReference type="ChEBI" id="CHEBI:49072"/>
        <dbReference type="ChEBI" id="CHEBI:57540"/>
        <dbReference type="ChEBI" id="CHEBI:57945"/>
        <dbReference type="ChEBI" id="CHEBI:58476"/>
        <dbReference type="EC" id="1.1.1.383"/>
    </reaction>
</comment>
<comment type="catalytic activity">
    <reaction evidence="4 6">
        <text>(2R)-2,3-dihydroxy-3-methylbutanoate + NADP(+) = (2S)-2-acetolactate + NADPH + H(+)</text>
        <dbReference type="Rhea" id="RHEA:22068"/>
        <dbReference type="ChEBI" id="CHEBI:15378"/>
        <dbReference type="ChEBI" id="CHEBI:49072"/>
        <dbReference type="ChEBI" id="CHEBI:57783"/>
        <dbReference type="ChEBI" id="CHEBI:58349"/>
        <dbReference type="ChEBI" id="CHEBI:58476"/>
        <dbReference type="EC" id="1.1.1.383"/>
    </reaction>
</comment>
<comment type="cofactor">
    <cofactor evidence="1 5">
        <name>Mg(2+)</name>
        <dbReference type="ChEBI" id="CHEBI:18420"/>
    </cofactor>
    <text evidence="1">Binds 2 magnesium ions per subunit.</text>
</comment>
<comment type="biophysicochemical properties">
    <kinetics>
        <KM evidence="6">3.1 mM for S2AL (at pH 7 and 85 degrees Celsius)</KM>
        <text evidence="4 6">kcat is 3.3 sec(-1) for reductoisomerase activity with NADPH (at pH 7 and 85 degrees Celsius with S2AL as substrate) (PubMed:26644020). kcat is 0.03 sec(-1) for reductoisomerase activity with NADPH (at pH 7 with S2AL as substrate) (PubMed:25172159). kcat is 0.02 sec(-1) for reductoisomerase activity with NADH (at pH 7 with S2AL as substrate) (PubMed:25172159).</text>
    </kinetics>
</comment>
<comment type="pathway">
    <text evidence="1">Amino-acid biosynthesis; L-isoleucine biosynthesis; L-isoleucine from 2-oxobutanoate: step 2/4.</text>
</comment>
<comment type="pathway">
    <text evidence="1">Amino-acid biosynthesis; L-valine biosynthesis; L-valine from pyruvate: step 2/4.</text>
</comment>
<comment type="subunit">
    <text evidence="5">Homodimer.</text>
</comment>
<comment type="similarity">
    <text evidence="1">Belongs to the ketol-acid reductoisomerase family.</text>
</comment>
<evidence type="ECO:0000255" key="1">
    <source>
        <dbReference type="HAMAP-Rule" id="MF_00435"/>
    </source>
</evidence>
<evidence type="ECO:0000255" key="2">
    <source>
        <dbReference type="PROSITE-ProRule" id="PRU01197"/>
    </source>
</evidence>
<evidence type="ECO:0000255" key="3">
    <source>
        <dbReference type="PROSITE-ProRule" id="PRU01198"/>
    </source>
</evidence>
<evidence type="ECO:0000269" key="4">
    <source>
    </source>
</evidence>
<evidence type="ECO:0000269" key="5">
    <source>
    </source>
</evidence>
<evidence type="ECO:0000269" key="6">
    <source>
    </source>
</evidence>
<evidence type="ECO:0000303" key="7">
    <source>
    </source>
</evidence>
<evidence type="ECO:0000312" key="8">
    <source>
        <dbReference type="EMBL" id="ADM28363.1"/>
    </source>
</evidence>
<evidence type="ECO:0007744" key="9">
    <source>
        <dbReference type="PDB" id="4XDZ"/>
    </source>
</evidence>
<evidence type="ECO:0007744" key="10">
    <source>
        <dbReference type="PDB" id="4XEH"/>
    </source>
</evidence>
<evidence type="ECO:0007744" key="11">
    <source>
        <dbReference type="PDB" id="5E4R"/>
    </source>
</evidence>
<evidence type="ECO:0007829" key="12">
    <source>
        <dbReference type="PDB" id="4XDZ"/>
    </source>
</evidence>
<name>ILVC_IGNAA</name>
<protein>
    <recommendedName>
        <fullName evidence="7">Ketol-acid reductoisomerase (NAD(P)(+))</fullName>
        <shortName evidence="1 7">KARI</shortName>
        <ecNumber evidence="4 6">1.1.1.383</ecNumber>
    </recommendedName>
    <alternativeName>
        <fullName evidence="1">Acetohydroxy-acid isomeroreductase</fullName>
        <shortName evidence="1">AHIR</shortName>
    </alternativeName>
    <alternativeName>
        <fullName evidence="1">Alpha-keto-beta-hydroxylacyl reductoisomerase</fullName>
    </alternativeName>
    <alternativeName>
        <fullName evidence="1 7">Ketol-acid reductoisomerase type 1</fullName>
    </alternativeName>
    <alternativeName>
        <fullName evidence="1 7">Ketol-acid reductoisomerase type I</fullName>
    </alternativeName>
</protein>
<dbReference type="EC" id="1.1.1.383" evidence="4 6"/>
<dbReference type="EMBL" id="CP002098">
    <property type="protein sequence ID" value="ADM28363.1"/>
    <property type="molecule type" value="Genomic_DNA"/>
</dbReference>
<dbReference type="PDB" id="4XDZ">
    <property type="method" value="X-ray"/>
    <property type="resolution" value="1.15 A"/>
    <property type="chains" value="A/B=1-335"/>
</dbReference>
<dbReference type="PDB" id="4XEH">
    <property type="method" value="X-ray"/>
    <property type="resolution" value="1.39 A"/>
    <property type="chains" value="A=1-335"/>
</dbReference>
<dbReference type="PDB" id="5E4R">
    <property type="method" value="X-ray"/>
    <property type="resolution" value="1.94 A"/>
    <property type="chains" value="A=1-335"/>
</dbReference>
<dbReference type="PDBsum" id="4XDZ"/>
<dbReference type="PDBsum" id="4XEH"/>
<dbReference type="PDBsum" id="5E4R"/>
<dbReference type="SMR" id="E0SRA9"/>
<dbReference type="STRING" id="583356.Igag_1561"/>
<dbReference type="KEGG" id="iag:Igag_1561"/>
<dbReference type="HOGENOM" id="CLU_033821_0_1_2"/>
<dbReference type="BRENDA" id="1.1.1.382">
    <property type="organism ID" value="14023"/>
</dbReference>
<dbReference type="BRENDA" id="1.1.1.86">
    <property type="organism ID" value="14023"/>
</dbReference>
<dbReference type="SABIO-RK" id="E0SRA9"/>
<dbReference type="UniPathway" id="UPA00047">
    <property type="reaction ID" value="UER00056"/>
</dbReference>
<dbReference type="UniPathway" id="UPA00049">
    <property type="reaction ID" value="UER00060"/>
</dbReference>
<dbReference type="EvolutionaryTrace" id="E0SRA9"/>
<dbReference type="Proteomes" id="UP000001304">
    <property type="component" value="Chromosome"/>
</dbReference>
<dbReference type="GO" id="GO:0004455">
    <property type="term" value="F:ketol-acid reductoisomerase activity"/>
    <property type="evidence" value="ECO:0007669"/>
    <property type="project" value="UniProtKB-UniRule"/>
</dbReference>
<dbReference type="GO" id="GO:0000287">
    <property type="term" value="F:magnesium ion binding"/>
    <property type="evidence" value="ECO:0007669"/>
    <property type="project" value="UniProtKB-UniRule"/>
</dbReference>
<dbReference type="GO" id="GO:0050661">
    <property type="term" value="F:NADP binding"/>
    <property type="evidence" value="ECO:0007669"/>
    <property type="project" value="InterPro"/>
</dbReference>
<dbReference type="GO" id="GO:0009097">
    <property type="term" value="P:isoleucine biosynthetic process"/>
    <property type="evidence" value="ECO:0007669"/>
    <property type="project" value="UniProtKB-UniRule"/>
</dbReference>
<dbReference type="GO" id="GO:0009099">
    <property type="term" value="P:L-valine biosynthetic process"/>
    <property type="evidence" value="ECO:0007669"/>
    <property type="project" value="UniProtKB-UniRule"/>
</dbReference>
<dbReference type="FunFam" id="3.40.50.720:FF:000023">
    <property type="entry name" value="Ketol-acid reductoisomerase (NADP(+))"/>
    <property type="match status" value="1"/>
</dbReference>
<dbReference type="Gene3D" id="6.10.240.10">
    <property type="match status" value="1"/>
</dbReference>
<dbReference type="Gene3D" id="3.40.50.720">
    <property type="entry name" value="NAD(P)-binding Rossmann-like Domain"/>
    <property type="match status" value="1"/>
</dbReference>
<dbReference type="HAMAP" id="MF_00435">
    <property type="entry name" value="IlvC"/>
    <property type="match status" value="1"/>
</dbReference>
<dbReference type="InterPro" id="IPR008927">
    <property type="entry name" value="6-PGluconate_DH-like_C_sf"/>
</dbReference>
<dbReference type="InterPro" id="IPR013023">
    <property type="entry name" value="KARI"/>
</dbReference>
<dbReference type="InterPro" id="IPR000506">
    <property type="entry name" value="KARI_C"/>
</dbReference>
<dbReference type="InterPro" id="IPR013116">
    <property type="entry name" value="KARI_N"/>
</dbReference>
<dbReference type="InterPro" id="IPR014359">
    <property type="entry name" value="KARI_prok"/>
</dbReference>
<dbReference type="InterPro" id="IPR036291">
    <property type="entry name" value="NAD(P)-bd_dom_sf"/>
</dbReference>
<dbReference type="NCBIfam" id="TIGR00465">
    <property type="entry name" value="ilvC"/>
    <property type="match status" value="1"/>
</dbReference>
<dbReference type="NCBIfam" id="NF004017">
    <property type="entry name" value="PRK05479.1"/>
    <property type="match status" value="1"/>
</dbReference>
<dbReference type="PANTHER" id="PTHR21371">
    <property type="entry name" value="KETOL-ACID REDUCTOISOMERASE, MITOCHONDRIAL"/>
    <property type="match status" value="1"/>
</dbReference>
<dbReference type="PANTHER" id="PTHR21371:SF1">
    <property type="entry name" value="KETOL-ACID REDUCTOISOMERASE, MITOCHONDRIAL"/>
    <property type="match status" value="1"/>
</dbReference>
<dbReference type="Pfam" id="PF01450">
    <property type="entry name" value="KARI_C"/>
    <property type="match status" value="1"/>
</dbReference>
<dbReference type="Pfam" id="PF07991">
    <property type="entry name" value="KARI_N"/>
    <property type="match status" value="1"/>
</dbReference>
<dbReference type="PIRSF" id="PIRSF000116">
    <property type="entry name" value="IlvC_gammaproteo"/>
    <property type="match status" value="1"/>
</dbReference>
<dbReference type="SUPFAM" id="SSF48179">
    <property type="entry name" value="6-phosphogluconate dehydrogenase C-terminal domain-like"/>
    <property type="match status" value="1"/>
</dbReference>
<dbReference type="SUPFAM" id="SSF51735">
    <property type="entry name" value="NAD(P)-binding Rossmann-fold domains"/>
    <property type="match status" value="1"/>
</dbReference>
<dbReference type="PROSITE" id="PS51851">
    <property type="entry name" value="KARI_C"/>
    <property type="match status" value="1"/>
</dbReference>
<dbReference type="PROSITE" id="PS51850">
    <property type="entry name" value="KARI_N"/>
    <property type="match status" value="1"/>
</dbReference>
<gene>
    <name evidence="1" type="primary">ilvC</name>
    <name evidence="8" type="ordered locus">Igag_1561</name>
</gene>
<reference key="1">
    <citation type="journal article" date="2010" name="Stand. Genomic Sci.">
        <title>Complete genome sequence of Ignisphaera aggregans type strain (AQ1.S1).</title>
        <authorList>
            <person name="Goker M."/>
            <person name="Held B."/>
            <person name="Lapidus A."/>
            <person name="Nolan M."/>
            <person name="Spring S."/>
            <person name="Yasawong M."/>
            <person name="Lucas S."/>
            <person name="Glavina Del Rio T."/>
            <person name="Tice H."/>
            <person name="Cheng J.F."/>
            <person name="Goodwin L."/>
            <person name="Tapia R."/>
            <person name="Pitluck S."/>
            <person name="Liolios K."/>
            <person name="Ivanova N."/>
            <person name="Mavromatis K."/>
            <person name="Mikhailova N."/>
            <person name="Pati A."/>
            <person name="Chen A."/>
            <person name="Palaniappan K."/>
            <person name="Brambilla E."/>
            <person name="Land M."/>
            <person name="Hauser L."/>
            <person name="Chang Y.J."/>
            <person name="Jeffries C.D."/>
            <person name="Brettin T."/>
            <person name="Detter J.C."/>
            <person name="Han C."/>
            <person name="Rohde M."/>
            <person name="Sikorski J."/>
            <person name="Woyke T."/>
            <person name="Bristow J."/>
            <person name="Eisen J.A."/>
            <person name="Markowitz V."/>
            <person name="Hugenholtz P."/>
            <person name="Kyrpides N.C."/>
            <person name="Klenk H.P."/>
        </authorList>
    </citation>
    <scope>NUCLEOTIDE SEQUENCE [LARGE SCALE GENOMIC DNA]</scope>
    <source>
        <strain>DSM 17230 / JCM 13409 / AQ1.S1</strain>
    </source>
</reference>
<reference key="2">
    <citation type="journal article" date="2014" name="Metab. Eng.">
        <title>Uncovering rare NADH-preferring ketol-acid reductoisomerases.</title>
        <authorList>
            <person name="Brinkmann-Chen S."/>
            <person name="Cahn J.K."/>
            <person name="Arnold F.H."/>
        </authorList>
    </citation>
    <scope>FUNCTION</scope>
    <scope>CATALYTIC ACTIVITY</scope>
    <scope>BIOPHYSICOCHEMICAL PROPERTIES</scope>
    <scope>SUBSTRATE SPECIFICITY</scope>
</reference>
<reference evidence="9 10" key="3">
    <citation type="journal article" date="2015" name="Biochem. J.">
        <title>Cofactor specificity motifs and the induced fit mechanism in class I ketol-acid reductoisomerases.</title>
        <authorList>
            <person name="Cahn J.K."/>
            <person name="Brinkmann-Chen S."/>
            <person name="Spatzal T."/>
            <person name="Wiig J.A."/>
            <person name="Buller A.R."/>
            <person name="Einsle O."/>
            <person name="Hu Y."/>
            <person name="Ribbe M.W."/>
            <person name="Arnold F.H."/>
        </authorList>
    </citation>
    <scope>X-RAY CRYSTALLOGRAPHY (1.15 ANGSTROMS) IN COMPLEX WITH NADP AND MAGNESIUM IONS</scope>
    <scope>COFACTOR</scope>
    <scope>SUBUNIT</scope>
</reference>
<reference evidence="11" key="4">
    <citation type="journal article" date="2016" name="Protein Sci.">
        <title>Artificial domain duplication replicates evolutionary history of ketol-acid reductoisomerases.</title>
        <authorList>
            <person name="Cahn J.K."/>
            <person name="Brinkmann-Chen S."/>
            <person name="Buller A.R."/>
            <person name="Arnold F.H."/>
        </authorList>
    </citation>
    <scope>X-RAY CRYSTALLOGRAPHY (1.94 ANGSTROMS) IN COMPLEX WITH NADP</scope>
    <scope>FUNCTION</scope>
    <scope>CATALYTIC ACTIVITY</scope>
    <scope>BIOPHYSICOCHEMICAL PROPERTIES</scope>
</reference>
<feature type="chain" id="PRO_0000436833" description="Ketol-acid reductoisomerase (NAD(P)(+))">
    <location>
        <begin position="1"/>
        <end position="335"/>
    </location>
</feature>
<feature type="domain" description="KARI N-terminal Rossmann" evidence="2">
    <location>
        <begin position="2"/>
        <end position="182"/>
    </location>
</feature>
<feature type="domain" description="KARI C-terminal knotted" evidence="3">
    <location>
        <begin position="183"/>
        <end position="328"/>
    </location>
</feature>
<feature type="active site" evidence="1">
    <location>
        <position position="108"/>
    </location>
</feature>
<feature type="binding site" evidence="1 5 9 11">
    <location>
        <begin position="25"/>
        <end position="28"/>
    </location>
    <ligand>
        <name>NADP(+)</name>
        <dbReference type="ChEBI" id="CHEBI:58349"/>
    </ligand>
</feature>
<feature type="binding site" evidence="5 9 11">
    <location>
        <position position="49"/>
    </location>
    <ligand>
        <name>NADP(+)</name>
        <dbReference type="ChEBI" id="CHEBI:58349"/>
    </ligand>
</feature>
<feature type="binding site" evidence="1 5 9 11">
    <location>
        <position position="53"/>
    </location>
    <ligand>
        <name>NADP(+)</name>
        <dbReference type="ChEBI" id="CHEBI:58349"/>
    </ligand>
</feature>
<feature type="binding site" evidence="1 5 9 11">
    <location>
        <begin position="83"/>
        <end position="86"/>
    </location>
    <ligand>
        <name>NADP(+)</name>
        <dbReference type="ChEBI" id="CHEBI:58349"/>
    </ligand>
</feature>
<feature type="binding site" evidence="1 5 9 11">
    <location>
        <position position="134"/>
    </location>
    <ligand>
        <name>NADP(+)</name>
        <dbReference type="ChEBI" id="CHEBI:58349"/>
    </ligand>
</feature>
<feature type="binding site" evidence="1 5">
    <location>
        <position position="191"/>
    </location>
    <ligand>
        <name>Mg(2+)</name>
        <dbReference type="ChEBI" id="CHEBI:18420"/>
        <label>1</label>
    </ligand>
</feature>
<feature type="binding site" evidence="1">
    <location>
        <position position="191"/>
    </location>
    <ligand>
        <name>Mg(2+)</name>
        <dbReference type="ChEBI" id="CHEBI:18420"/>
        <label>2</label>
    </ligand>
</feature>
<feature type="binding site" evidence="1 5">
    <location>
        <position position="195"/>
    </location>
    <ligand>
        <name>Mg(2+)</name>
        <dbReference type="ChEBI" id="CHEBI:18420"/>
        <label>1</label>
    </ligand>
</feature>
<feature type="binding site" evidence="1">
    <location>
        <position position="227"/>
    </location>
    <ligand>
        <name>Mg(2+)</name>
        <dbReference type="ChEBI" id="CHEBI:18420"/>
        <label>2</label>
    </ligand>
</feature>
<feature type="binding site" evidence="1">
    <location>
        <position position="231"/>
    </location>
    <ligand>
        <name>Mg(2+)</name>
        <dbReference type="ChEBI" id="CHEBI:18420"/>
        <label>2</label>
    </ligand>
</feature>
<feature type="binding site" evidence="1">
    <location>
        <position position="252"/>
    </location>
    <ligand>
        <name>substrate</name>
    </ligand>
</feature>
<feature type="helix" evidence="12">
    <location>
        <begin position="7"/>
        <end position="9"/>
    </location>
</feature>
<feature type="helix" evidence="12">
    <location>
        <begin position="13"/>
        <end position="15"/>
    </location>
</feature>
<feature type="strand" evidence="12">
    <location>
        <begin position="19"/>
        <end position="23"/>
    </location>
</feature>
<feature type="helix" evidence="12">
    <location>
        <begin position="27"/>
        <end position="38"/>
    </location>
</feature>
<feature type="strand" evidence="12">
    <location>
        <begin position="42"/>
        <end position="51"/>
    </location>
</feature>
<feature type="helix" evidence="12">
    <location>
        <begin position="52"/>
        <end position="59"/>
    </location>
</feature>
<feature type="helix" evidence="12">
    <location>
        <begin position="67"/>
        <end position="72"/>
    </location>
</feature>
<feature type="strand" evidence="12">
    <location>
        <begin position="75"/>
        <end position="79"/>
    </location>
</feature>
<feature type="helix" evidence="12">
    <location>
        <begin position="83"/>
        <end position="85"/>
    </location>
</feature>
<feature type="helix" evidence="12">
    <location>
        <begin position="86"/>
        <end position="93"/>
    </location>
</feature>
<feature type="turn" evidence="12">
    <location>
        <begin position="94"/>
        <end position="97"/>
    </location>
</feature>
<feature type="strand" evidence="12">
    <location>
        <begin position="103"/>
        <end position="109"/>
    </location>
</feature>
<feature type="helix" evidence="12">
    <location>
        <begin position="110"/>
        <end position="113"/>
    </location>
</feature>
<feature type="strand" evidence="12">
    <location>
        <begin position="125"/>
        <end position="132"/>
    </location>
</feature>
<feature type="helix" evidence="12">
    <location>
        <begin position="134"/>
        <end position="142"/>
    </location>
</feature>
<feature type="strand" evidence="12">
    <location>
        <begin position="149"/>
        <end position="155"/>
    </location>
</feature>
<feature type="strand" evidence="12">
    <location>
        <begin position="157"/>
        <end position="159"/>
    </location>
</feature>
<feature type="helix" evidence="12">
    <location>
        <begin position="161"/>
        <end position="171"/>
    </location>
</feature>
<feature type="helix" evidence="12">
    <location>
        <begin position="174"/>
        <end position="176"/>
    </location>
</feature>
<feature type="strand" evidence="12">
    <location>
        <begin position="179"/>
        <end position="181"/>
    </location>
</feature>
<feature type="helix" evidence="12">
    <location>
        <begin position="184"/>
        <end position="197"/>
    </location>
</feature>
<feature type="turn" evidence="12">
    <location>
        <begin position="198"/>
        <end position="200"/>
    </location>
</feature>
<feature type="helix" evidence="12">
    <location>
        <begin position="201"/>
        <end position="216"/>
    </location>
</feature>
<feature type="helix" evidence="12">
    <location>
        <begin position="221"/>
        <end position="228"/>
    </location>
</feature>
<feature type="helix" evidence="12">
    <location>
        <begin position="230"/>
        <end position="250"/>
    </location>
</feature>
<feature type="helix" evidence="12">
    <location>
        <begin position="253"/>
        <end position="266"/>
    </location>
</feature>
<feature type="helix" evidence="12">
    <location>
        <begin position="269"/>
        <end position="283"/>
    </location>
</feature>
<feature type="helix" evidence="12">
    <location>
        <begin position="286"/>
        <end position="296"/>
    </location>
</feature>
<feature type="helix" evidence="12">
    <location>
        <begin position="300"/>
        <end position="310"/>
    </location>
</feature>
<feature type="helix" evidence="12">
    <location>
        <begin position="313"/>
        <end position="325"/>
    </location>
</feature>
<organism>
    <name type="scientific">Ignisphaera aggregans (strain DSM 17230 / JCM 13409 / AQ1.S1)</name>
    <dbReference type="NCBI Taxonomy" id="583356"/>
    <lineage>
        <taxon>Archaea</taxon>
        <taxon>Thermoproteota</taxon>
        <taxon>Thermoprotei</taxon>
        <taxon>Desulfurococcales</taxon>
        <taxon>Desulfurococcaceae</taxon>
        <taxon>Ignisphaera</taxon>
    </lineage>
</organism>
<proteinExistence type="evidence at protein level"/>